<comment type="function">
    <text evidence="1">Condenses 4-methyl-5-(beta-hydroxyethyl)thiazole monophosphate (THZ-P) and 2-methyl-4-amino-5-hydroxymethyl pyrimidine pyrophosphate (HMP-PP) to form thiamine monophosphate (TMP).</text>
</comment>
<comment type="catalytic activity">
    <reaction evidence="1">
        <text>2-[(2R,5Z)-2-carboxy-4-methylthiazol-5(2H)-ylidene]ethyl phosphate + 4-amino-2-methyl-5-(diphosphooxymethyl)pyrimidine + 2 H(+) = thiamine phosphate + CO2 + diphosphate</text>
        <dbReference type="Rhea" id="RHEA:47844"/>
        <dbReference type="ChEBI" id="CHEBI:15378"/>
        <dbReference type="ChEBI" id="CHEBI:16526"/>
        <dbReference type="ChEBI" id="CHEBI:33019"/>
        <dbReference type="ChEBI" id="CHEBI:37575"/>
        <dbReference type="ChEBI" id="CHEBI:57841"/>
        <dbReference type="ChEBI" id="CHEBI:62899"/>
        <dbReference type="EC" id="2.5.1.3"/>
    </reaction>
</comment>
<comment type="catalytic activity">
    <reaction evidence="1">
        <text>2-(2-carboxy-4-methylthiazol-5-yl)ethyl phosphate + 4-amino-2-methyl-5-(diphosphooxymethyl)pyrimidine + 2 H(+) = thiamine phosphate + CO2 + diphosphate</text>
        <dbReference type="Rhea" id="RHEA:47848"/>
        <dbReference type="ChEBI" id="CHEBI:15378"/>
        <dbReference type="ChEBI" id="CHEBI:16526"/>
        <dbReference type="ChEBI" id="CHEBI:33019"/>
        <dbReference type="ChEBI" id="CHEBI:37575"/>
        <dbReference type="ChEBI" id="CHEBI:57841"/>
        <dbReference type="ChEBI" id="CHEBI:62890"/>
        <dbReference type="EC" id="2.5.1.3"/>
    </reaction>
</comment>
<comment type="catalytic activity">
    <reaction evidence="1">
        <text>4-methyl-5-(2-phosphooxyethyl)-thiazole + 4-amino-2-methyl-5-(diphosphooxymethyl)pyrimidine + H(+) = thiamine phosphate + diphosphate</text>
        <dbReference type="Rhea" id="RHEA:22328"/>
        <dbReference type="ChEBI" id="CHEBI:15378"/>
        <dbReference type="ChEBI" id="CHEBI:33019"/>
        <dbReference type="ChEBI" id="CHEBI:37575"/>
        <dbReference type="ChEBI" id="CHEBI:57841"/>
        <dbReference type="ChEBI" id="CHEBI:58296"/>
        <dbReference type="EC" id="2.5.1.3"/>
    </reaction>
</comment>
<comment type="cofactor">
    <cofactor evidence="1">
        <name>Mg(2+)</name>
        <dbReference type="ChEBI" id="CHEBI:18420"/>
    </cofactor>
    <text evidence="1">Binds 1 Mg(2+) ion per subunit.</text>
</comment>
<comment type="pathway">
    <text evidence="1">Cofactor biosynthesis; thiamine diphosphate biosynthesis; thiamine phosphate from 4-amino-2-methyl-5-diphosphomethylpyrimidine and 4-methyl-5-(2-phosphoethyl)-thiazole: step 1/1.</text>
</comment>
<comment type="similarity">
    <text evidence="1">Belongs to the thiamine-phosphate synthase family.</text>
</comment>
<organism>
    <name type="scientific">Parasynechococcus marenigrum (strain WH8102)</name>
    <dbReference type="NCBI Taxonomy" id="84588"/>
    <lineage>
        <taxon>Bacteria</taxon>
        <taxon>Bacillati</taxon>
        <taxon>Cyanobacteriota</taxon>
        <taxon>Cyanophyceae</taxon>
        <taxon>Synechococcales</taxon>
        <taxon>Prochlorococcaceae</taxon>
        <taxon>Parasynechococcus</taxon>
        <taxon>Parasynechococcus marenigrum</taxon>
    </lineage>
</organism>
<reference key="1">
    <citation type="journal article" date="2003" name="Nature">
        <title>The genome of a motile marine Synechococcus.</title>
        <authorList>
            <person name="Palenik B."/>
            <person name="Brahamsha B."/>
            <person name="Larimer F.W."/>
            <person name="Land M.L."/>
            <person name="Hauser L."/>
            <person name="Chain P."/>
            <person name="Lamerdin J.E."/>
            <person name="Regala W."/>
            <person name="Allen E.E."/>
            <person name="McCarren J."/>
            <person name="Paulsen I.T."/>
            <person name="Dufresne A."/>
            <person name="Partensky F."/>
            <person name="Webb E.A."/>
            <person name="Waterbury J."/>
        </authorList>
    </citation>
    <scope>NUCLEOTIDE SEQUENCE [LARGE SCALE GENOMIC DNA]</scope>
    <source>
        <strain>WH8102</strain>
    </source>
</reference>
<feature type="chain" id="PRO_0000157085" description="Thiamine-phosphate synthase">
    <location>
        <begin position="1"/>
        <end position="349"/>
    </location>
</feature>
<feature type="region of interest" description="Unknown">
    <location>
        <begin position="1"/>
        <end position="125"/>
    </location>
</feature>
<feature type="region of interest" description="Disordered" evidence="2">
    <location>
        <begin position="63"/>
        <end position="85"/>
    </location>
</feature>
<feature type="region of interest" description="Thiamine-phosphate synthase">
    <location>
        <begin position="126"/>
        <end position="349"/>
    </location>
</feature>
<feature type="binding site" evidence="1">
    <location>
        <begin position="177"/>
        <end position="181"/>
    </location>
    <ligand>
        <name>4-amino-2-methyl-5-(diphosphooxymethyl)pyrimidine</name>
        <dbReference type="ChEBI" id="CHEBI:57841"/>
    </ligand>
</feature>
<feature type="binding site" evidence="1">
    <location>
        <position position="209"/>
    </location>
    <ligand>
        <name>4-amino-2-methyl-5-(diphosphooxymethyl)pyrimidine</name>
        <dbReference type="ChEBI" id="CHEBI:57841"/>
    </ligand>
</feature>
<feature type="binding site" evidence="1">
    <location>
        <position position="210"/>
    </location>
    <ligand>
        <name>Mg(2+)</name>
        <dbReference type="ChEBI" id="CHEBI:18420"/>
    </ligand>
</feature>
<feature type="binding site" evidence="1">
    <location>
        <position position="229"/>
    </location>
    <ligand>
        <name>Mg(2+)</name>
        <dbReference type="ChEBI" id="CHEBI:18420"/>
    </ligand>
</feature>
<feature type="binding site" evidence="1">
    <location>
        <position position="248"/>
    </location>
    <ligand>
        <name>4-amino-2-methyl-5-(diphosphooxymethyl)pyrimidine</name>
        <dbReference type="ChEBI" id="CHEBI:57841"/>
    </ligand>
</feature>
<feature type="binding site" evidence="1">
    <location>
        <position position="277"/>
    </location>
    <ligand>
        <name>4-amino-2-methyl-5-(diphosphooxymethyl)pyrimidine</name>
        <dbReference type="ChEBI" id="CHEBI:57841"/>
    </ligand>
</feature>
<feature type="binding site" evidence="1">
    <location>
        <position position="304"/>
    </location>
    <ligand>
        <name>2-[(2R,5Z)-2-carboxy-4-methylthiazol-5(2H)-ylidene]ethyl phosphate</name>
        <dbReference type="ChEBI" id="CHEBI:62899"/>
    </ligand>
</feature>
<accession>Q7U5U1</accession>
<evidence type="ECO:0000255" key="1">
    <source>
        <dbReference type="HAMAP-Rule" id="MF_01327"/>
    </source>
</evidence>
<evidence type="ECO:0000256" key="2">
    <source>
        <dbReference type="SAM" id="MobiDB-lite"/>
    </source>
</evidence>
<name>THIE_PARMW</name>
<sequence>MGCESSLDPRVARLIDANLDRAREGLRVVEDWCRFGLERDDLVISLKDWRQRLGKLHQERYKRARSTVTDPGAGMEHPAQLDRHSPRQVVEANCGRVQEALRVLEEYGRNVDAPLSAEAAAIRYGLYDLEVTCLTATSGNNRRNRLQDCQLCLITSPCPDLVDRVKTALRSGVAMVQHRCKSGSDLERLAEARTLAALCRDHGALLIINDRIDLALAVDADGVHLGQDDLPTDVARGLIGPGRLLGRSTHSLNQVAEAHREDCDYLGLGPVNNTAVKPERPAIGAALVGEALAITHKPVFAIGGISQANLDALMAVGCRRVAVIGAIMGSDNPEKASQNLLSSLSRPTL</sequence>
<dbReference type="EC" id="2.5.1.3" evidence="1"/>
<dbReference type="EMBL" id="BX569693">
    <property type="protein sequence ID" value="CAE08119.1"/>
    <property type="molecule type" value="Genomic_DNA"/>
</dbReference>
<dbReference type="RefSeq" id="WP_011128468.1">
    <property type="nucleotide sequence ID" value="NC_005070.1"/>
</dbReference>
<dbReference type="SMR" id="Q7U5U1"/>
<dbReference type="STRING" id="84588.SYNW1604"/>
<dbReference type="KEGG" id="syw:SYNW1604"/>
<dbReference type="eggNOG" id="COG0352">
    <property type="taxonomic scope" value="Bacteria"/>
</dbReference>
<dbReference type="HOGENOM" id="CLU_064900_0_0_3"/>
<dbReference type="UniPathway" id="UPA00060">
    <property type="reaction ID" value="UER00141"/>
</dbReference>
<dbReference type="Proteomes" id="UP000001422">
    <property type="component" value="Chromosome"/>
</dbReference>
<dbReference type="GO" id="GO:0005737">
    <property type="term" value="C:cytoplasm"/>
    <property type="evidence" value="ECO:0007669"/>
    <property type="project" value="TreeGrafter"/>
</dbReference>
<dbReference type="GO" id="GO:0000287">
    <property type="term" value="F:magnesium ion binding"/>
    <property type="evidence" value="ECO:0007669"/>
    <property type="project" value="UniProtKB-UniRule"/>
</dbReference>
<dbReference type="GO" id="GO:0004789">
    <property type="term" value="F:thiamine-phosphate diphosphorylase activity"/>
    <property type="evidence" value="ECO:0007669"/>
    <property type="project" value="UniProtKB-UniRule"/>
</dbReference>
<dbReference type="GO" id="GO:0009228">
    <property type="term" value="P:thiamine biosynthetic process"/>
    <property type="evidence" value="ECO:0007669"/>
    <property type="project" value="UniProtKB-KW"/>
</dbReference>
<dbReference type="GO" id="GO:0009229">
    <property type="term" value="P:thiamine diphosphate biosynthetic process"/>
    <property type="evidence" value="ECO:0007669"/>
    <property type="project" value="UniProtKB-UniRule"/>
</dbReference>
<dbReference type="CDD" id="cd00564">
    <property type="entry name" value="TMP_TenI"/>
    <property type="match status" value="1"/>
</dbReference>
<dbReference type="Gene3D" id="3.20.20.70">
    <property type="entry name" value="Aldolase class I"/>
    <property type="match status" value="1"/>
</dbReference>
<dbReference type="HAMAP" id="MF_00097">
    <property type="entry name" value="TMP_synthase"/>
    <property type="match status" value="1"/>
</dbReference>
<dbReference type="HAMAP" id="MF_01327">
    <property type="entry name" value="TMP_synthase_cyanobact"/>
    <property type="match status" value="1"/>
</dbReference>
<dbReference type="InterPro" id="IPR013785">
    <property type="entry name" value="Aldolase_TIM"/>
</dbReference>
<dbReference type="InterPro" id="IPR036206">
    <property type="entry name" value="ThiamineP_synth_sf"/>
</dbReference>
<dbReference type="InterPro" id="IPR022998">
    <property type="entry name" value="ThiamineP_synth_TenI"/>
</dbReference>
<dbReference type="InterPro" id="IPR041397">
    <property type="entry name" value="ThiD2"/>
</dbReference>
<dbReference type="InterPro" id="IPR034291">
    <property type="entry name" value="TMP_synthase"/>
</dbReference>
<dbReference type="InterPro" id="IPR016229">
    <property type="entry name" value="TMP_synthase_cyanobac_bac"/>
</dbReference>
<dbReference type="NCBIfam" id="NF002727">
    <property type="entry name" value="PRK02615.1"/>
    <property type="match status" value="1"/>
</dbReference>
<dbReference type="NCBIfam" id="TIGR00693">
    <property type="entry name" value="thiE"/>
    <property type="match status" value="1"/>
</dbReference>
<dbReference type="PANTHER" id="PTHR20857">
    <property type="entry name" value="THIAMINE-PHOSPHATE PYROPHOSPHORYLASE"/>
    <property type="match status" value="1"/>
</dbReference>
<dbReference type="PANTHER" id="PTHR20857:SF15">
    <property type="entry name" value="THIAMINE-PHOSPHATE SYNTHASE"/>
    <property type="match status" value="1"/>
</dbReference>
<dbReference type="Pfam" id="PF17792">
    <property type="entry name" value="ThiD2"/>
    <property type="match status" value="1"/>
</dbReference>
<dbReference type="Pfam" id="PF02581">
    <property type="entry name" value="TMP-TENI"/>
    <property type="match status" value="1"/>
</dbReference>
<dbReference type="PIRSF" id="PIRSF000512">
    <property type="entry name" value="TMP_PPase_Cyanobac_prd"/>
    <property type="match status" value="1"/>
</dbReference>
<dbReference type="SUPFAM" id="SSF51391">
    <property type="entry name" value="Thiamin phosphate synthase"/>
    <property type="match status" value="1"/>
</dbReference>
<protein>
    <recommendedName>
        <fullName evidence="1">Thiamine-phosphate synthase</fullName>
        <shortName evidence="1">TP synthase</shortName>
        <shortName evidence="1">TPS</shortName>
        <ecNumber evidence="1">2.5.1.3</ecNumber>
    </recommendedName>
    <alternativeName>
        <fullName evidence="1">Thiamine-phosphate pyrophosphorylase</fullName>
        <shortName evidence="1">TMP pyrophosphorylase</shortName>
        <shortName evidence="1">TMP-PPase</shortName>
    </alternativeName>
</protein>
<gene>
    <name evidence="1" type="primary">thiE</name>
    <name type="ordered locus">SYNW1604</name>
</gene>
<keyword id="KW-0460">Magnesium</keyword>
<keyword id="KW-0479">Metal-binding</keyword>
<keyword id="KW-0784">Thiamine biosynthesis</keyword>
<keyword id="KW-0808">Transferase</keyword>
<proteinExistence type="inferred from homology"/>